<protein>
    <recommendedName>
        <fullName>Profilin-2</fullName>
    </recommendedName>
    <alternativeName>
        <fullName>Pollen allergen Ole e 2</fullName>
    </alternativeName>
    <allergenName>Ole e 2</allergenName>
</protein>
<organism>
    <name type="scientific">Olea europaea</name>
    <name type="common">Common olive</name>
    <dbReference type="NCBI Taxonomy" id="4146"/>
    <lineage>
        <taxon>Eukaryota</taxon>
        <taxon>Viridiplantae</taxon>
        <taxon>Streptophyta</taxon>
        <taxon>Embryophyta</taxon>
        <taxon>Tracheophyta</taxon>
        <taxon>Spermatophyta</taxon>
        <taxon>Magnoliopsida</taxon>
        <taxon>eudicotyledons</taxon>
        <taxon>Gunneridae</taxon>
        <taxon>Pentapetalae</taxon>
        <taxon>asterids</taxon>
        <taxon>lamiids</taxon>
        <taxon>Lamiales</taxon>
        <taxon>Oleaceae</taxon>
        <taxon>Oleeae</taxon>
        <taxon>Olea</taxon>
    </lineage>
</organism>
<reference key="1">
    <citation type="journal article" date="2012" name="PLoS ONE">
        <title>Characterization of profilin polymorphism in pollen with a focus on multifunctionality.</title>
        <authorList>
            <person name="Jimenez-Lopez J.C."/>
            <person name="Morales S."/>
            <person name="Castro A.J."/>
            <person name="Volkmann D."/>
            <person name="Rodriguez-Garcia M.I."/>
            <person name="Alche Jde D."/>
        </authorList>
    </citation>
    <scope>NUCLEOTIDE SEQUENCE [MRNA]</scope>
    <scope>POLYMORPHISM</scope>
    <source>
        <strain>cv. Farga</strain>
        <tissue>Pollen</tissue>
    </source>
</reference>
<reference key="2">
    <citation type="journal article" date="2013" name="PLoS ONE">
        <title>Analysis of the effects of polymorphism on pollen profilin structural functionality and the generation of conformational, T- and B-cell epitopes.</title>
        <authorList>
            <person name="Jimenez-Lopez J.C."/>
            <person name="Rodriguez-Garcia M.I."/>
            <person name="Alche J.D."/>
        </authorList>
    </citation>
    <scope>3D-STRUCTURE MODELING</scope>
    <scope>DISULFIDE BOND</scope>
</reference>
<accession>P0DKF1</accession>
<accession>A4GD57</accession>
<proteinExistence type="evidence at protein level"/>
<comment type="function">
    <text evidence="1">Binds to actin and affects the structure of the cytoskeleton. At high concentrations, profilin prevents the polymerization of actin, whereas it enhances it at low concentrations (By similarity).</text>
</comment>
<comment type="subunit">
    <text evidence="1">Occurs in many kinds of cells as a complex with monomeric actin in a 1:1 ratio.</text>
</comment>
<comment type="subcellular location">
    <subcellularLocation>
        <location evidence="1">Cytoplasm</location>
        <location evidence="1">Cytoskeleton</location>
    </subcellularLocation>
</comment>
<comment type="PTM">
    <text evidence="1">Phosphorylated by MAP kinases.</text>
</comment>
<comment type="polymorphism">
    <text>Several isoforms of the allergen exist due to polymorphism.</text>
</comment>
<comment type="allergen">
    <text>Causes an allergic reaction in human.</text>
</comment>
<comment type="miscellaneous">
    <text evidence="3">The variability of the residues taking part of IgE-binding epitopes might be responsible of the difference in cross-reactivity among olive pollen cultivars, and between distantly related pollen species, leading to a variable range of allergy reactions among atopic patients.</text>
</comment>
<comment type="similarity">
    <text evidence="2">Belongs to the profilin family.</text>
</comment>
<name>PROAG_OLEEU</name>
<sequence length="134" mass="14383">MSWQAYVDDHLMCDIEGHEGHRLTAAAIVGHDGSVWAQSATFPQFKPEEMNGIMTDFNEPGHLAPTGLHLGGTKYMVIQGEAGAVIRGKKGSGGITIKKTGQALVCGIYEEPVTPGQCNMVVERLGDYLLEQGL</sequence>
<keyword id="KW-0009">Actin-binding</keyword>
<keyword id="KW-0020">Allergen</keyword>
<keyword id="KW-0963">Cytoplasm</keyword>
<keyword id="KW-0206">Cytoskeleton</keyword>
<keyword id="KW-1015">Disulfide bond</keyword>
<keyword id="KW-0597">Phosphoprotein</keyword>
<dbReference type="EMBL" id="DQ317566">
    <property type="protein sequence ID" value="ABC47409.1"/>
    <property type="molecule type" value="mRNA"/>
</dbReference>
<dbReference type="SMR" id="P0DKF1"/>
<dbReference type="GO" id="GO:0005938">
    <property type="term" value="C:cell cortex"/>
    <property type="evidence" value="ECO:0007669"/>
    <property type="project" value="TreeGrafter"/>
</dbReference>
<dbReference type="GO" id="GO:0005856">
    <property type="term" value="C:cytoskeleton"/>
    <property type="evidence" value="ECO:0007669"/>
    <property type="project" value="UniProtKB-SubCell"/>
</dbReference>
<dbReference type="GO" id="GO:0003785">
    <property type="term" value="F:actin monomer binding"/>
    <property type="evidence" value="ECO:0007669"/>
    <property type="project" value="TreeGrafter"/>
</dbReference>
<dbReference type="CDD" id="cd00148">
    <property type="entry name" value="PROF"/>
    <property type="match status" value="1"/>
</dbReference>
<dbReference type="FunFam" id="3.30.450.30:FF:000001">
    <property type="entry name" value="Profilin"/>
    <property type="match status" value="1"/>
</dbReference>
<dbReference type="Gene3D" id="3.30.450.30">
    <property type="entry name" value="Dynein light chain 2a, cytoplasmic"/>
    <property type="match status" value="1"/>
</dbReference>
<dbReference type="InterPro" id="IPR048278">
    <property type="entry name" value="PFN"/>
</dbReference>
<dbReference type="InterPro" id="IPR005455">
    <property type="entry name" value="PFN_euk"/>
</dbReference>
<dbReference type="InterPro" id="IPR036140">
    <property type="entry name" value="PFN_sf"/>
</dbReference>
<dbReference type="InterPro" id="IPR027310">
    <property type="entry name" value="Profilin_CS"/>
</dbReference>
<dbReference type="PANTHER" id="PTHR11604">
    <property type="entry name" value="PROFILIN"/>
    <property type="match status" value="1"/>
</dbReference>
<dbReference type="PANTHER" id="PTHR11604:SF25">
    <property type="entry name" value="PROFILIN-5"/>
    <property type="match status" value="1"/>
</dbReference>
<dbReference type="Pfam" id="PF00235">
    <property type="entry name" value="Profilin"/>
    <property type="match status" value="1"/>
</dbReference>
<dbReference type="PRINTS" id="PR00392">
    <property type="entry name" value="PROFILIN"/>
</dbReference>
<dbReference type="PRINTS" id="PR01640">
    <property type="entry name" value="PROFILINPLNT"/>
</dbReference>
<dbReference type="SMART" id="SM00392">
    <property type="entry name" value="PROF"/>
    <property type="match status" value="1"/>
</dbReference>
<dbReference type="SUPFAM" id="SSF55770">
    <property type="entry name" value="Profilin (actin-binding protein)"/>
    <property type="match status" value="1"/>
</dbReference>
<dbReference type="PROSITE" id="PS00414">
    <property type="entry name" value="PROFILIN"/>
    <property type="match status" value="1"/>
</dbReference>
<feature type="initiator methionine" description="Removed" evidence="1">
    <location>
        <position position="1"/>
    </location>
</feature>
<feature type="chain" id="PRO_0000424998" description="Profilin-2">
    <location>
        <begin position="2"/>
        <end position="134"/>
    </location>
</feature>
<feature type="short sequence motif" description="Involved in PIP2 interaction">
    <location>
        <begin position="84"/>
        <end position="100"/>
    </location>
</feature>
<feature type="modified residue" description="Phosphothreonine" evidence="1">
    <location>
        <position position="114"/>
    </location>
</feature>
<feature type="disulfide bond" evidence="3">
    <location>
        <begin position="13"/>
        <end position="118"/>
    </location>
</feature>
<evidence type="ECO:0000250" key="1"/>
<evidence type="ECO:0000305" key="2"/>
<evidence type="ECO:0000305" key="3">
    <source>
    </source>
</evidence>